<gene>
    <name evidence="1" type="primary">rplD</name>
    <name type="ordered locus">YPO0211</name>
    <name type="ordered locus">y3991</name>
    <name type="ordered locus">YP_0208</name>
</gene>
<keyword id="KW-1185">Reference proteome</keyword>
<keyword id="KW-0687">Ribonucleoprotein</keyword>
<keyword id="KW-0689">Ribosomal protein</keyword>
<keyword id="KW-0694">RNA-binding</keyword>
<keyword id="KW-0699">rRNA-binding</keyword>
<feature type="chain" id="PRO_0000129319" description="Large ribosomal subunit protein uL4">
    <location>
        <begin position="1"/>
        <end position="201"/>
    </location>
</feature>
<feature type="region of interest" description="Disordered" evidence="2">
    <location>
        <begin position="45"/>
        <end position="73"/>
    </location>
</feature>
<protein>
    <recommendedName>
        <fullName evidence="1">Large ribosomal subunit protein uL4</fullName>
    </recommendedName>
    <alternativeName>
        <fullName evidence="3">50S ribosomal protein L4</fullName>
    </alternativeName>
</protein>
<name>RL4_YERPE</name>
<proteinExistence type="inferred from homology"/>
<sequence>MELVMKDAPGALTVSETTFGRDFNEALVHQVVVAYAAGARQGTRAQKTRAEVTGSGKKPWRQKGTGRARAGSVKSPIWRSGGVTFAAKPQDHSQKVNKKMYRGALKSILSELVRQDRLIIVEKFSVEAPKTKLLAQKLKDMALEDVLIVTGELDENLFLAARNLYKVDVRDVAGIDPVSLIAFDKVVMTADAVKQVEEMLA</sequence>
<accession>P60730</accession>
<accession>P11253</accession>
<accession>Q0WK97</accession>
<evidence type="ECO:0000255" key="1">
    <source>
        <dbReference type="HAMAP-Rule" id="MF_01328"/>
    </source>
</evidence>
<evidence type="ECO:0000256" key="2">
    <source>
        <dbReference type="SAM" id="MobiDB-lite"/>
    </source>
</evidence>
<evidence type="ECO:0000305" key="3"/>
<organism>
    <name type="scientific">Yersinia pestis</name>
    <dbReference type="NCBI Taxonomy" id="632"/>
    <lineage>
        <taxon>Bacteria</taxon>
        <taxon>Pseudomonadati</taxon>
        <taxon>Pseudomonadota</taxon>
        <taxon>Gammaproteobacteria</taxon>
        <taxon>Enterobacterales</taxon>
        <taxon>Yersiniaceae</taxon>
        <taxon>Yersinia</taxon>
    </lineage>
</organism>
<reference key="1">
    <citation type="journal article" date="2001" name="Nature">
        <title>Genome sequence of Yersinia pestis, the causative agent of plague.</title>
        <authorList>
            <person name="Parkhill J."/>
            <person name="Wren B.W."/>
            <person name="Thomson N.R."/>
            <person name="Titball R.W."/>
            <person name="Holden M.T.G."/>
            <person name="Prentice M.B."/>
            <person name="Sebaihia M."/>
            <person name="James K.D."/>
            <person name="Churcher C.M."/>
            <person name="Mungall K.L."/>
            <person name="Baker S."/>
            <person name="Basham D."/>
            <person name="Bentley S.D."/>
            <person name="Brooks K."/>
            <person name="Cerdeno-Tarraga A.-M."/>
            <person name="Chillingworth T."/>
            <person name="Cronin A."/>
            <person name="Davies R.M."/>
            <person name="Davis P."/>
            <person name="Dougan G."/>
            <person name="Feltwell T."/>
            <person name="Hamlin N."/>
            <person name="Holroyd S."/>
            <person name="Jagels K."/>
            <person name="Karlyshev A.V."/>
            <person name="Leather S."/>
            <person name="Moule S."/>
            <person name="Oyston P.C.F."/>
            <person name="Quail M.A."/>
            <person name="Rutherford K.M."/>
            <person name="Simmonds M."/>
            <person name="Skelton J."/>
            <person name="Stevens K."/>
            <person name="Whitehead S."/>
            <person name="Barrell B.G."/>
        </authorList>
    </citation>
    <scope>NUCLEOTIDE SEQUENCE [LARGE SCALE GENOMIC DNA]</scope>
    <source>
        <strain>CO-92 / Biovar Orientalis</strain>
    </source>
</reference>
<reference key="2">
    <citation type="journal article" date="2002" name="J. Bacteriol.">
        <title>Genome sequence of Yersinia pestis KIM.</title>
        <authorList>
            <person name="Deng W."/>
            <person name="Burland V."/>
            <person name="Plunkett G. III"/>
            <person name="Boutin A."/>
            <person name="Mayhew G.F."/>
            <person name="Liss P."/>
            <person name="Perna N.T."/>
            <person name="Rose D.J."/>
            <person name="Mau B."/>
            <person name="Zhou S."/>
            <person name="Schwartz D.C."/>
            <person name="Fetherston J.D."/>
            <person name="Lindler L.E."/>
            <person name="Brubaker R.R."/>
            <person name="Plano G.V."/>
            <person name="Straley S.C."/>
            <person name="McDonough K.A."/>
            <person name="Nilles M.L."/>
            <person name="Matson J.S."/>
            <person name="Blattner F.R."/>
            <person name="Perry R.D."/>
        </authorList>
    </citation>
    <scope>NUCLEOTIDE SEQUENCE [LARGE SCALE GENOMIC DNA]</scope>
    <source>
        <strain>KIM10+ / Biovar Mediaevalis</strain>
    </source>
</reference>
<reference key="3">
    <citation type="journal article" date="2004" name="DNA Res.">
        <title>Complete genome sequence of Yersinia pestis strain 91001, an isolate avirulent to humans.</title>
        <authorList>
            <person name="Song Y."/>
            <person name="Tong Z."/>
            <person name="Wang J."/>
            <person name="Wang L."/>
            <person name="Guo Z."/>
            <person name="Han Y."/>
            <person name="Zhang J."/>
            <person name="Pei D."/>
            <person name="Zhou D."/>
            <person name="Qin H."/>
            <person name="Pang X."/>
            <person name="Han Y."/>
            <person name="Zhai J."/>
            <person name="Li M."/>
            <person name="Cui B."/>
            <person name="Qi Z."/>
            <person name="Jin L."/>
            <person name="Dai R."/>
            <person name="Chen F."/>
            <person name="Li S."/>
            <person name="Ye C."/>
            <person name="Du Z."/>
            <person name="Lin W."/>
            <person name="Wang J."/>
            <person name="Yu J."/>
            <person name="Yang H."/>
            <person name="Wang J."/>
            <person name="Huang P."/>
            <person name="Yang R."/>
        </authorList>
    </citation>
    <scope>NUCLEOTIDE SEQUENCE [LARGE SCALE GENOMIC DNA]</scope>
    <source>
        <strain>91001 / Biovar Mediaevalis</strain>
    </source>
</reference>
<dbReference type="EMBL" id="AL590842">
    <property type="protein sequence ID" value="CAL18893.1"/>
    <property type="molecule type" value="Genomic_DNA"/>
</dbReference>
<dbReference type="EMBL" id="AE009952">
    <property type="protein sequence ID" value="AAM87535.1"/>
    <property type="molecule type" value="Genomic_DNA"/>
</dbReference>
<dbReference type="EMBL" id="AE017042">
    <property type="protein sequence ID" value="AAS60484.1"/>
    <property type="molecule type" value="Genomic_DNA"/>
</dbReference>
<dbReference type="PIR" id="AC0026">
    <property type="entry name" value="AC0026"/>
</dbReference>
<dbReference type="RefSeq" id="WP_002218934.1">
    <property type="nucleotide sequence ID" value="NZ_WUCM01000078.1"/>
</dbReference>
<dbReference type="RefSeq" id="YP_002345291.1">
    <property type="nucleotide sequence ID" value="NC_003143.1"/>
</dbReference>
<dbReference type="SMR" id="P60730"/>
<dbReference type="STRING" id="214092.YPO0211"/>
<dbReference type="PaxDb" id="214092-YPO0211"/>
<dbReference type="DNASU" id="1148938"/>
<dbReference type="EnsemblBacteria" id="AAS60484">
    <property type="protein sequence ID" value="AAS60484"/>
    <property type="gene ID" value="YP_0208"/>
</dbReference>
<dbReference type="GeneID" id="96663195"/>
<dbReference type="KEGG" id="ype:YPO0211"/>
<dbReference type="KEGG" id="ypk:y3991"/>
<dbReference type="KEGG" id="ypm:YP_0208"/>
<dbReference type="PATRIC" id="fig|1028802.3.peg.165"/>
<dbReference type="eggNOG" id="COG0088">
    <property type="taxonomic scope" value="Bacteria"/>
</dbReference>
<dbReference type="HOGENOM" id="CLU_041575_5_2_6"/>
<dbReference type="OMA" id="PQVHILE"/>
<dbReference type="OrthoDB" id="9803201at2"/>
<dbReference type="Proteomes" id="UP000000815">
    <property type="component" value="Chromosome"/>
</dbReference>
<dbReference type="Proteomes" id="UP000001019">
    <property type="component" value="Chromosome"/>
</dbReference>
<dbReference type="Proteomes" id="UP000002490">
    <property type="component" value="Chromosome"/>
</dbReference>
<dbReference type="GO" id="GO:1990904">
    <property type="term" value="C:ribonucleoprotein complex"/>
    <property type="evidence" value="ECO:0007669"/>
    <property type="project" value="UniProtKB-KW"/>
</dbReference>
<dbReference type="GO" id="GO:0005840">
    <property type="term" value="C:ribosome"/>
    <property type="evidence" value="ECO:0007669"/>
    <property type="project" value="UniProtKB-KW"/>
</dbReference>
<dbReference type="GO" id="GO:0019843">
    <property type="term" value="F:rRNA binding"/>
    <property type="evidence" value="ECO:0007669"/>
    <property type="project" value="UniProtKB-UniRule"/>
</dbReference>
<dbReference type="GO" id="GO:0003735">
    <property type="term" value="F:structural constituent of ribosome"/>
    <property type="evidence" value="ECO:0000318"/>
    <property type="project" value="GO_Central"/>
</dbReference>
<dbReference type="GO" id="GO:0006412">
    <property type="term" value="P:translation"/>
    <property type="evidence" value="ECO:0007669"/>
    <property type="project" value="UniProtKB-UniRule"/>
</dbReference>
<dbReference type="FunFam" id="3.40.1370.10:FF:000001">
    <property type="entry name" value="50S ribosomal protein L4"/>
    <property type="match status" value="1"/>
</dbReference>
<dbReference type="Gene3D" id="3.40.1370.10">
    <property type="match status" value="1"/>
</dbReference>
<dbReference type="HAMAP" id="MF_01328_B">
    <property type="entry name" value="Ribosomal_uL4_B"/>
    <property type="match status" value="1"/>
</dbReference>
<dbReference type="InterPro" id="IPR002136">
    <property type="entry name" value="Ribosomal_uL4"/>
</dbReference>
<dbReference type="InterPro" id="IPR013005">
    <property type="entry name" value="Ribosomal_uL4-like"/>
</dbReference>
<dbReference type="InterPro" id="IPR023574">
    <property type="entry name" value="Ribosomal_uL4_dom_sf"/>
</dbReference>
<dbReference type="NCBIfam" id="TIGR03953">
    <property type="entry name" value="rplD_bact"/>
    <property type="match status" value="1"/>
</dbReference>
<dbReference type="PANTHER" id="PTHR10746">
    <property type="entry name" value="50S RIBOSOMAL PROTEIN L4"/>
    <property type="match status" value="1"/>
</dbReference>
<dbReference type="PANTHER" id="PTHR10746:SF6">
    <property type="entry name" value="LARGE RIBOSOMAL SUBUNIT PROTEIN UL4M"/>
    <property type="match status" value="1"/>
</dbReference>
<dbReference type="Pfam" id="PF00573">
    <property type="entry name" value="Ribosomal_L4"/>
    <property type="match status" value="1"/>
</dbReference>
<dbReference type="SUPFAM" id="SSF52166">
    <property type="entry name" value="Ribosomal protein L4"/>
    <property type="match status" value="1"/>
</dbReference>
<comment type="function">
    <text evidence="1">One of the primary rRNA binding proteins, this protein initially binds near the 5'-end of the 23S rRNA. It is important during the early stages of 50S assembly. It makes multiple contacts with different domains of the 23S rRNA in the assembled 50S subunit and ribosome.</text>
</comment>
<comment type="function">
    <text evidence="1">Forms part of the polypeptide exit tunnel.</text>
</comment>
<comment type="subunit">
    <text evidence="1">Part of the 50S ribosomal subunit.</text>
</comment>
<comment type="similarity">
    <text evidence="1">Belongs to the universal ribosomal protein uL4 family.</text>
</comment>